<evidence type="ECO:0000255" key="1">
    <source>
        <dbReference type="HAMAP-Rule" id="MF_00052"/>
    </source>
</evidence>
<evidence type="ECO:0000255" key="2">
    <source>
        <dbReference type="PROSITE-ProRule" id="PRU01319"/>
    </source>
</evidence>
<accession>B4TK58</accession>
<keyword id="KW-0963">Cytoplasm</keyword>
<keyword id="KW-0255">Endonuclease</keyword>
<keyword id="KW-0378">Hydrolase</keyword>
<keyword id="KW-0464">Manganese</keyword>
<keyword id="KW-0479">Metal-binding</keyword>
<keyword id="KW-0540">Nuclease</keyword>
<organism>
    <name type="scientific">Salmonella heidelberg (strain SL476)</name>
    <dbReference type="NCBI Taxonomy" id="454169"/>
    <lineage>
        <taxon>Bacteria</taxon>
        <taxon>Pseudomonadati</taxon>
        <taxon>Pseudomonadota</taxon>
        <taxon>Gammaproteobacteria</taxon>
        <taxon>Enterobacterales</taxon>
        <taxon>Enterobacteriaceae</taxon>
        <taxon>Salmonella</taxon>
    </lineage>
</organism>
<protein>
    <recommendedName>
        <fullName evidence="1">Ribonuclease HII</fullName>
        <shortName evidence="1">RNase HII</shortName>
        <ecNumber evidence="1">3.1.26.4</ecNumber>
    </recommendedName>
</protein>
<comment type="function">
    <text evidence="1">Endonuclease that specifically degrades the RNA of RNA-DNA hybrids.</text>
</comment>
<comment type="catalytic activity">
    <reaction evidence="1">
        <text>Endonucleolytic cleavage to 5'-phosphomonoester.</text>
        <dbReference type="EC" id="3.1.26.4"/>
    </reaction>
</comment>
<comment type="cofactor">
    <cofactor evidence="1">
        <name>Mn(2+)</name>
        <dbReference type="ChEBI" id="CHEBI:29035"/>
    </cofactor>
    <cofactor evidence="1">
        <name>Mg(2+)</name>
        <dbReference type="ChEBI" id="CHEBI:18420"/>
    </cofactor>
    <text evidence="1">Manganese or magnesium. Binds 1 divalent metal ion per monomer in the absence of substrate. May bind a second metal ion after substrate binding.</text>
</comment>
<comment type="subcellular location">
    <subcellularLocation>
        <location evidence="1">Cytoplasm</location>
    </subcellularLocation>
</comment>
<comment type="similarity">
    <text evidence="1">Belongs to the RNase HII family.</text>
</comment>
<gene>
    <name evidence="1" type="primary">rnhB</name>
    <name type="ordered locus">SeHA_C0268</name>
</gene>
<proteinExistence type="inferred from homology"/>
<name>RNH2_SALHS</name>
<dbReference type="EC" id="3.1.26.4" evidence="1"/>
<dbReference type="EMBL" id="CP001120">
    <property type="protein sequence ID" value="ACF66364.1"/>
    <property type="molecule type" value="Genomic_DNA"/>
</dbReference>
<dbReference type="RefSeq" id="WP_000569412.1">
    <property type="nucleotide sequence ID" value="NC_011083.1"/>
</dbReference>
<dbReference type="SMR" id="B4TK58"/>
<dbReference type="KEGG" id="seh:SeHA_C0268"/>
<dbReference type="HOGENOM" id="CLU_036532_3_2_6"/>
<dbReference type="Proteomes" id="UP000001866">
    <property type="component" value="Chromosome"/>
</dbReference>
<dbReference type="GO" id="GO:0005737">
    <property type="term" value="C:cytoplasm"/>
    <property type="evidence" value="ECO:0007669"/>
    <property type="project" value="UniProtKB-SubCell"/>
</dbReference>
<dbReference type="GO" id="GO:0032299">
    <property type="term" value="C:ribonuclease H2 complex"/>
    <property type="evidence" value="ECO:0007669"/>
    <property type="project" value="TreeGrafter"/>
</dbReference>
<dbReference type="GO" id="GO:0030145">
    <property type="term" value="F:manganese ion binding"/>
    <property type="evidence" value="ECO:0007669"/>
    <property type="project" value="UniProtKB-UniRule"/>
</dbReference>
<dbReference type="GO" id="GO:0003723">
    <property type="term" value="F:RNA binding"/>
    <property type="evidence" value="ECO:0007669"/>
    <property type="project" value="InterPro"/>
</dbReference>
<dbReference type="GO" id="GO:0004523">
    <property type="term" value="F:RNA-DNA hybrid ribonuclease activity"/>
    <property type="evidence" value="ECO:0007669"/>
    <property type="project" value="UniProtKB-UniRule"/>
</dbReference>
<dbReference type="GO" id="GO:0043137">
    <property type="term" value="P:DNA replication, removal of RNA primer"/>
    <property type="evidence" value="ECO:0007669"/>
    <property type="project" value="TreeGrafter"/>
</dbReference>
<dbReference type="GO" id="GO:0006298">
    <property type="term" value="P:mismatch repair"/>
    <property type="evidence" value="ECO:0007669"/>
    <property type="project" value="TreeGrafter"/>
</dbReference>
<dbReference type="CDD" id="cd07182">
    <property type="entry name" value="RNase_HII_bacteria_HII_like"/>
    <property type="match status" value="1"/>
</dbReference>
<dbReference type="FunFam" id="3.30.420.10:FF:000006">
    <property type="entry name" value="Ribonuclease HII"/>
    <property type="match status" value="1"/>
</dbReference>
<dbReference type="Gene3D" id="3.30.420.10">
    <property type="entry name" value="Ribonuclease H-like superfamily/Ribonuclease H"/>
    <property type="match status" value="1"/>
</dbReference>
<dbReference type="HAMAP" id="MF_00052_B">
    <property type="entry name" value="RNase_HII_B"/>
    <property type="match status" value="1"/>
</dbReference>
<dbReference type="InterPro" id="IPR022898">
    <property type="entry name" value="RNase_HII"/>
</dbReference>
<dbReference type="InterPro" id="IPR001352">
    <property type="entry name" value="RNase_HII/HIII"/>
</dbReference>
<dbReference type="InterPro" id="IPR024567">
    <property type="entry name" value="RNase_HII/HIII_dom"/>
</dbReference>
<dbReference type="InterPro" id="IPR012337">
    <property type="entry name" value="RNaseH-like_sf"/>
</dbReference>
<dbReference type="InterPro" id="IPR036397">
    <property type="entry name" value="RNaseH_sf"/>
</dbReference>
<dbReference type="NCBIfam" id="NF000594">
    <property type="entry name" value="PRK00015.1-1"/>
    <property type="match status" value="1"/>
</dbReference>
<dbReference type="NCBIfam" id="NF000595">
    <property type="entry name" value="PRK00015.1-3"/>
    <property type="match status" value="1"/>
</dbReference>
<dbReference type="NCBIfam" id="NF000596">
    <property type="entry name" value="PRK00015.1-4"/>
    <property type="match status" value="1"/>
</dbReference>
<dbReference type="PANTHER" id="PTHR10954">
    <property type="entry name" value="RIBONUCLEASE H2 SUBUNIT A"/>
    <property type="match status" value="1"/>
</dbReference>
<dbReference type="PANTHER" id="PTHR10954:SF18">
    <property type="entry name" value="RIBONUCLEASE HII"/>
    <property type="match status" value="1"/>
</dbReference>
<dbReference type="Pfam" id="PF01351">
    <property type="entry name" value="RNase_HII"/>
    <property type="match status" value="1"/>
</dbReference>
<dbReference type="SUPFAM" id="SSF53098">
    <property type="entry name" value="Ribonuclease H-like"/>
    <property type="match status" value="1"/>
</dbReference>
<dbReference type="PROSITE" id="PS51975">
    <property type="entry name" value="RNASE_H_2"/>
    <property type="match status" value="1"/>
</dbReference>
<sequence>MIEFVYPHTHLVAGVDEVGRGPLVGAVVTAAVILDPARPIVGLNDSKKLSEKRRLSLYDEIKEKALSWSLGRAEAHEIDELNILHATMLAMQRAVAGLHIAPEYVLIDGNRCPELPVPSMAVVKGDSRVAEISAASILAKVTRDAEMAALDIVFPQYGFAQHKGYPTAFHLEKLAQYGATAHHRRSFAPVKRALGLVS</sequence>
<feature type="chain" id="PRO_1000091652" description="Ribonuclease HII">
    <location>
        <begin position="1"/>
        <end position="198"/>
    </location>
</feature>
<feature type="domain" description="RNase H type-2" evidence="2">
    <location>
        <begin position="10"/>
        <end position="198"/>
    </location>
</feature>
<feature type="binding site" evidence="1">
    <location>
        <position position="16"/>
    </location>
    <ligand>
        <name>a divalent metal cation</name>
        <dbReference type="ChEBI" id="CHEBI:60240"/>
    </ligand>
</feature>
<feature type="binding site" evidence="1">
    <location>
        <position position="17"/>
    </location>
    <ligand>
        <name>a divalent metal cation</name>
        <dbReference type="ChEBI" id="CHEBI:60240"/>
    </ligand>
</feature>
<feature type="binding site" evidence="1">
    <location>
        <position position="108"/>
    </location>
    <ligand>
        <name>a divalent metal cation</name>
        <dbReference type="ChEBI" id="CHEBI:60240"/>
    </ligand>
</feature>
<reference key="1">
    <citation type="journal article" date="2011" name="J. Bacteriol.">
        <title>Comparative genomics of 28 Salmonella enterica isolates: evidence for CRISPR-mediated adaptive sublineage evolution.</title>
        <authorList>
            <person name="Fricke W.F."/>
            <person name="Mammel M.K."/>
            <person name="McDermott P.F."/>
            <person name="Tartera C."/>
            <person name="White D.G."/>
            <person name="Leclerc J.E."/>
            <person name="Ravel J."/>
            <person name="Cebula T.A."/>
        </authorList>
    </citation>
    <scope>NUCLEOTIDE SEQUENCE [LARGE SCALE GENOMIC DNA]</scope>
    <source>
        <strain>SL476</strain>
    </source>
</reference>